<gene>
    <name type="primary">nad4</name>
    <name type="ORF">DDB_G0294048</name>
</gene>
<keyword id="KW-0249">Electron transport</keyword>
<keyword id="KW-0472">Membrane</keyword>
<keyword id="KW-0496">Mitochondrion</keyword>
<keyword id="KW-0520">NAD</keyword>
<keyword id="KW-1185">Reference proteome</keyword>
<keyword id="KW-0679">Respiratory chain</keyword>
<keyword id="KW-1278">Translocase</keyword>
<keyword id="KW-0812">Transmembrane</keyword>
<keyword id="KW-1133">Transmembrane helix</keyword>
<keyword id="KW-0813">Transport</keyword>
<keyword id="KW-0830">Ubiquinone</keyword>
<evidence type="ECO:0000250" key="1"/>
<evidence type="ECO:0000255" key="2"/>
<evidence type="ECO:0000305" key="3"/>
<protein>
    <recommendedName>
        <fullName>NADH-ubiquinone oxidoreductase chain 4</fullName>
        <ecNumber>7.1.1.2</ecNumber>
    </recommendedName>
    <alternativeName>
        <fullName>NADH dehydrogenase subunit 4</fullName>
    </alternativeName>
</protein>
<feature type="chain" id="PRO_0000311825" description="NADH-ubiquinone oxidoreductase chain 4">
    <location>
        <begin position="1"/>
        <end position="540"/>
    </location>
</feature>
<feature type="transmembrane region" description="Helical" evidence="2">
    <location>
        <begin position="2"/>
        <end position="22"/>
    </location>
</feature>
<feature type="transmembrane region" description="Helical" evidence="2">
    <location>
        <begin position="35"/>
        <end position="55"/>
    </location>
</feature>
<feature type="transmembrane region" description="Helical" evidence="2">
    <location>
        <begin position="89"/>
        <end position="109"/>
    </location>
</feature>
<feature type="transmembrane region" description="Helical" evidence="2">
    <location>
        <begin position="118"/>
        <end position="138"/>
    </location>
</feature>
<feature type="transmembrane region" description="Helical" evidence="2">
    <location>
        <begin position="140"/>
        <end position="160"/>
    </location>
</feature>
<feature type="transmembrane region" description="Helical" evidence="2">
    <location>
        <begin position="172"/>
        <end position="192"/>
    </location>
</feature>
<feature type="transmembrane region" description="Helical" evidence="2">
    <location>
        <begin position="218"/>
        <end position="238"/>
    </location>
</feature>
<feature type="transmembrane region" description="Helical" evidence="2">
    <location>
        <begin position="248"/>
        <end position="268"/>
    </location>
</feature>
<feature type="transmembrane region" description="Helical" evidence="2">
    <location>
        <begin position="282"/>
        <end position="302"/>
    </location>
</feature>
<feature type="transmembrane region" description="Helical" evidence="2">
    <location>
        <begin position="310"/>
        <end position="330"/>
    </location>
</feature>
<feature type="transmembrane region" description="Helical" evidence="2">
    <location>
        <begin position="338"/>
        <end position="358"/>
    </location>
</feature>
<feature type="transmembrane region" description="Helical" evidence="2">
    <location>
        <begin position="376"/>
        <end position="396"/>
    </location>
</feature>
<feature type="transmembrane region" description="Helical" evidence="2">
    <location>
        <begin position="415"/>
        <end position="435"/>
    </location>
</feature>
<feature type="transmembrane region" description="Helical" evidence="2">
    <location>
        <begin position="501"/>
        <end position="521"/>
    </location>
</feature>
<geneLocation type="mitochondrion"/>
<organism>
    <name type="scientific">Dictyostelium discoideum</name>
    <name type="common">Social amoeba</name>
    <dbReference type="NCBI Taxonomy" id="44689"/>
    <lineage>
        <taxon>Eukaryota</taxon>
        <taxon>Amoebozoa</taxon>
        <taxon>Evosea</taxon>
        <taxon>Eumycetozoa</taxon>
        <taxon>Dictyostelia</taxon>
        <taxon>Dictyosteliales</taxon>
        <taxon>Dictyosteliaceae</taxon>
        <taxon>Dictyostelium</taxon>
    </lineage>
</organism>
<comment type="function">
    <text evidence="1">Core subunit of the mitochondrial membrane respiratory chain NADH dehydrogenase (Complex I) that is believed to belong to the minimal assembly required for catalysis. Complex I functions in the transfer of electrons from NADH to the respiratory chain. The immediate electron acceptor for the enzyme is believed to be ubiquinone (By similarity).</text>
</comment>
<comment type="catalytic activity">
    <reaction>
        <text>a ubiquinone + NADH + 5 H(+)(in) = a ubiquinol + NAD(+) + 4 H(+)(out)</text>
        <dbReference type="Rhea" id="RHEA:29091"/>
        <dbReference type="Rhea" id="RHEA-COMP:9565"/>
        <dbReference type="Rhea" id="RHEA-COMP:9566"/>
        <dbReference type="ChEBI" id="CHEBI:15378"/>
        <dbReference type="ChEBI" id="CHEBI:16389"/>
        <dbReference type="ChEBI" id="CHEBI:17976"/>
        <dbReference type="ChEBI" id="CHEBI:57540"/>
        <dbReference type="ChEBI" id="CHEBI:57945"/>
        <dbReference type="EC" id="7.1.1.2"/>
    </reaction>
</comment>
<comment type="subcellular location">
    <subcellularLocation>
        <location evidence="1">Mitochondrion membrane</location>
        <topology evidence="1">Multi-pass membrane protein</topology>
    </subcellularLocation>
</comment>
<comment type="similarity">
    <text evidence="3">Belongs to the complex I subunit 4 family.</text>
</comment>
<sequence>MTIIAISIMNVVIGIAILGVILRKKIMPNQKFQRIFILGVQGILIVLSGIMLIGCEGTDIINRISPYINMVTVYSNNVNINIGYSIDGISAIFIFLTIILILSCNLISIRVIKEKTEQKFQIMLLLTEILIINFFAATDLVQLYIVYEATLIPMVIMIGVWGSRTEKKIAAFQILIYTLIGSIFMLMSIGILYSTLGTTDYIMIREYIDVLPENVRKLIFIGFFIGFAVKIPIAPLHLWLLRAHVEAPTAGSVLLAGILLKLGGYGYIRYNIGLFPDLCEYYFPIIGGICLISILYTGIATLTQLDVKRIVAYSSISHMNVIVLGLFSGVLQGIEGGIILMIGHGVVSGGLFLCIGVIYDRCKTRIVYAYNNLVHVMPIMAILFFLLVLGNIAFPITSNFVGELLIFIGLIKKNIIIAFFSALSMIVTAIYSFWLYNRIFFVNEIIKREANEVISSKGQIVADMNALFLIEDVMKKKEERGIDDIGQPKEVKKEQLIYSDVNIFEFTSISLMVIMMIIIGMKPSVVEGFIAINCLELISK</sequence>
<name>NU4M_DICDI</name>
<reference key="1">
    <citation type="journal article" date="1997" name="Curr. Genet.">
        <title>Group-I introns in the cytochrome c oxidase genes of Dictyostelium discoideum: two related ORFs in one loop of a group-I intron, a cox1/2 hybrid gene and an unusually large cox3 gene.</title>
        <authorList>
            <person name="Ogawa S."/>
            <person name="Matsuo K."/>
            <person name="Angata K."/>
            <person name="Yanagisawa K."/>
            <person name="Tanaka Y."/>
        </authorList>
    </citation>
    <scope>NUCLEOTIDE SEQUENCE [GENOMIC DNA]</scope>
    <source>
        <strain>AX3</strain>
    </source>
</reference>
<reference key="2">
    <citation type="journal article" date="2000" name="Mol. Gen. Genet.">
        <title>The mitochondrial DNA of Dictyostelium discoideum: complete sequence, gene content and genome organization.</title>
        <authorList>
            <person name="Ogawa S."/>
            <person name="Yoshino R."/>
            <person name="Angata K."/>
            <person name="Iwamoto M."/>
            <person name="Pi M."/>
            <person name="Kuroe K."/>
            <person name="Matsuo K."/>
            <person name="Morio T."/>
            <person name="Urushihara H."/>
            <person name="Yanagisawa K."/>
            <person name="Tanaka Y."/>
        </authorList>
    </citation>
    <scope>NUCLEOTIDE SEQUENCE [LARGE SCALE GENOMIC DNA]</scope>
    <source>
        <strain>AX3</strain>
    </source>
</reference>
<accession>O21047</accession>
<dbReference type="EC" id="7.1.1.2"/>
<dbReference type="EMBL" id="D16579">
    <property type="protein sequence ID" value="BAA21118.1"/>
    <property type="molecule type" value="Genomic_DNA"/>
</dbReference>
<dbReference type="EMBL" id="AB000109">
    <property type="protein sequence ID" value="BAA78051.1"/>
    <property type="molecule type" value="Genomic_DNA"/>
</dbReference>
<dbReference type="PIR" id="T43747">
    <property type="entry name" value="T43747"/>
</dbReference>
<dbReference type="RefSeq" id="NP_050069.1">
    <property type="nucleotide sequence ID" value="NC_000895.1"/>
</dbReference>
<dbReference type="SMR" id="O21047"/>
<dbReference type="FunCoup" id="O21047">
    <property type="interactions" value="18"/>
</dbReference>
<dbReference type="STRING" id="44689.O21047"/>
<dbReference type="GlyGen" id="O21047">
    <property type="glycosylation" value="1 site"/>
</dbReference>
<dbReference type="GeneID" id="2193891"/>
<dbReference type="KEGG" id="ddi:DidioMp02"/>
<dbReference type="dictyBase" id="DDB_G0294048">
    <property type="gene designation" value="nad4"/>
</dbReference>
<dbReference type="VEuPathDB" id="AmoebaDB:DidioMp02"/>
<dbReference type="InParanoid" id="O21047"/>
<dbReference type="OMA" id="ITRWGNQ"/>
<dbReference type="PhylomeDB" id="O21047"/>
<dbReference type="PRO" id="PR:O21047"/>
<dbReference type="Proteomes" id="UP000002195">
    <property type="component" value="Mitochondrion"/>
</dbReference>
<dbReference type="GO" id="GO:0031966">
    <property type="term" value="C:mitochondrial membrane"/>
    <property type="evidence" value="ECO:0007669"/>
    <property type="project" value="UniProtKB-SubCell"/>
</dbReference>
<dbReference type="GO" id="GO:0045271">
    <property type="term" value="C:respiratory chain complex I"/>
    <property type="evidence" value="ECO:0000318"/>
    <property type="project" value="GO_Central"/>
</dbReference>
<dbReference type="GO" id="GO:0008137">
    <property type="term" value="F:NADH dehydrogenase (ubiquinone) activity"/>
    <property type="evidence" value="ECO:0007669"/>
    <property type="project" value="UniProtKB-EC"/>
</dbReference>
<dbReference type="GO" id="GO:0048039">
    <property type="term" value="F:ubiquinone binding"/>
    <property type="evidence" value="ECO:0000318"/>
    <property type="project" value="GO_Central"/>
</dbReference>
<dbReference type="GO" id="GO:0009060">
    <property type="term" value="P:aerobic respiration"/>
    <property type="evidence" value="ECO:0000318"/>
    <property type="project" value="GO_Central"/>
</dbReference>
<dbReference type="GO" id="GO:0042773">
    <property type="term" value="P:ATP synthesis coupled electron transport"/>
    <property type="evidence" value="ECO:0007669"/>
    <property type="project" value="InterPro"/>
</dbReference>
<dbReference type="GO" id="GO:0015990">
    <property type="term" value="P:electron transport coupled proton transport"/>
    <property type="evidence" value="ECO:0000318"/>
    <property type="project" value="GO_Central"/>
</dbReference>
<dbReference type="InterPro" id="IPR010227">
    <property type="entry name" value="NADH_Q_OxRdtase_chainM/4"/>
</dbReference>
<dbReference type="InterPro" id="IPR003918">
    <property type="entry name" value="NADH_UbQ_OxRdtase"/>
</dbReference>
<dbReference type="InterPro" id="IPR001750">
    <property type="entry name" value="ND/Mrp_TM"/>
</dbReference>
<dbReference type="NCBIfam" id="TIGR01972">
    <property type="entry name" value="NDH_I_M"/>
    <property type="match status" value="1"/>
</dbReference>
<dbReference type="PANTHER" id="PTHR43507">
    <property type="entry name" value="NADH-UBIQUINONE OXIDOREDUCTASE CHAIN 4"/>
    <property type="match status" value="1"/>
</dbReference>
<dbReference type="PANTHER" id="PTHR43507:SF1">
    <property type="entry name" value="NADH-UBIQUINONE OXIDOREDUCTASE CHAIN 4"/>
    <property type="match status" value="1"/>
</dbReference>
<dbReference type="Pfam" id="PF00361">
    <property type="entry name" value="Proton_antipo_M"/>
    <property type="match status" value="1"/>
</dbReference>
<dbReference type="PRINTS" id="PR01437">
    <property type="entry name" value="NUOXDRDTASE4"/>
</dbReference>
<proteinExistence type="inferred from homology"/>